<protein>
    <recommendedName>
        <fullName evidence="1">Small ribosomal subunit protein bS16</fullName>
    </recommendedName>
    <alternativeName>
        <fullName evidence="2">30S ribosomal protein S16</fullName>
    </alternativeName>
</protein>
<gene>
    <name evidence="1" type="primary">rpsP</name>
    <name type="ordered locus">BAMEG_0649</name>
</gene>
<dbReference type="EMBL" id="CP001215">
    <property type="protein sequence ID" value="ACP12478.1"/>
    <property type="molecule type" value="Genomic_DNA"/>
</dbReference>
<dbReference type="RefSeq" id="WP_000268750.1">
    <property type="nucleotide sequence ID" value="NC_012581.1"/>
</dbReference>
<dbReference type="SMR" id="C3L783"/>
<dbReference type="GeneID" id="93007268"/>
<dbReference type="KEGG" id="bah:BAMEG_0649"/>
<dbReference type="HOGENOM" id="CLU_100590_5_0_9"/>
<dbReference type="GO" id="GO:0005737">
    <property type="term" value="C:cytoplasm"/>
    <property type="evidence" value="ECO:0007669"/>
    <property type="project" value="UniProtKB-ARBA"/>
</dbReference>
<dbReference type="GO" id="GO:0015935">
    <property type="term" value="C:small ribosomal subunit"/>
    <property type="evidence" value="ECO:0007669"/>
    <property type="project" value="TreeGrafter"/>
</dbReference>
<dbReference type="GO" id="GO:0003735">
    <property type="term" value="F:structural constituent of ribosome"/>
    <property type="evidence" value="ECO:0007669"/>
    <property type="project" value="InterPro"/>
</dbReference>
<dbReference type="GO" id="GO:0006412">
    <property type="term" value="P:translation"/>
    <property type="evidence" value="ECO:0007669"/>
    <property type="project" value="UniProtKB-UniRule"/>
</dbReference>
<dbReference type="FunFam" id="3.30.1320.10:FF:000002">
    <property type="entry name" value="30S ribosomal protein S16"/>
    <property type="match status" value="1"/>
</dbReference>
<dbReference type="Gene3D" id="3.30.1320.10">
    <property type="match status" value="1"/>
</dbReference>
<dbReference type="HAMAP" id="MF_00385">
    <property type="entry name" value="Ribosomal_bS16"/>
    <property type="match status" value="1"/>
</dbReference>
<dbReference type="InterPro" id="IPR000307">
    <property type="entry name" value="Ribosomal_bS16"/>
</dbReference>
<dbReference type="InterPro" id="IPR020592">
    <property type="entry name" value="Ribosomal_bS16_CS"/>
</dbReference>
<dbReference type="InterPro" id="IPR023803">
    <property type="entry name" value="Ribosomal_bS16_dom_sf"/>
</dbReference>
<dbReference type="NCBIfam" id="TIGR00002">
    <property type="entry name" value="S16"/>
    <property type="match status" value="1"/>
</dbReference>
<dbReference type="PANTHER" id="PTHR12919">
    <property type="entry name" value="30S RIBOSOMAL PROTEIN S16"/>
    <property type="match status" value="1"/>
</dbReference>
<dbReference type="PANTHER" id="PTHR12919:SF20">
    <property type="entry name" value="SMALL RIBOSOMAL SUBUNIT PROTEIN BS16M"/>
    <property type="match status" value="1"/>
</dbReference>
<dbReference type="Pfam" id="PF00886">
    <property type="entry name" value="Ribosomal_S16"/>
    <property type="match status" value="1"/>
</dbReference>
<dbReference type="SUPFAM" id="SSF54565">
    <property type="entry name" value="Ribosomal protein S16"/>
    <property type="match status" value="1"/>
</dbReference>
<dbReference type="PROSITE" id="PS00732">
    <property type="entry name" value="RIBOSOMAL_S16"/>
    <property type="match status" value="1"/>
</dbReference>
<name>RS16_BACAC</name>
<organism>
    <name type="scientific">Bacillus anthracis (strain CDC 684 / NRRL 3495)</name>
    <dbReference type="NCBI Taxonomy" id="568206"/>
    <lineage>
        <taxon>Bacteria</taxon>
        <taxon>Bacillati</taxon>
        <taxon>Bacillota</taxon>
        <taxon>Bacilli</taxon>
        <taxon>Bacillales</taxon>
        <taxon>Bacillaceae</taxon>
        <taxon>Bacillus</taxon>
        <taxon>Bacillus cereus group</taxon>
    </lineage>
</organism>
<sequence>MAVKIRLKRMGAKKTPFYRVVVADSRSPRDGRFIEEIGTYNPVAQPAEVKINEEAALKWLGNGAKPSDTVRNLFSNQGIMEKFHLSKQGK</sequence>
<proteinExistence type="inferred from homology"/>
<comment type="similarity">
    <text evidence="1">Belongs to the bacterial ribosomal protein bS16 family.</text>
</comment>
<reference key="1">
    <citation type="submission" date="2008-10" db="EMBL/GenBank/DDBJ databases">
        <title>Genome sequence of Bacillus anthracis str. CDC 684.</title>
        <authorList>
            <person name="Dodson R.J."/>
            <person name="Munk A.C."/>
            <person name="Brettin T."/>
            <person name="Bruce D."/>
            <person name="Detter C."/>
            <person name="Tapia R."/>
            <person name="Han C."/>
            <person name="Sutton G."/>
            <person name="Sims D."/>
        </authorList>
    </citation>
    <scope>NUCLEOTIDE SEQUENCE [LARGE SCALE GENOMIC DNA]</scope>
    <source>
        <strain>CDC 684 / NRRL 3495</strain>
    </source>
</reference>
<accession>C3L783</accession>
<feature type="chain" id="PRO_1000196329" description="Small ribosomal subunit protein bS16">
    <location>
        <begin position="1"/>
        <end position="90"/>
    </location>
</feature>
<keyword id="KW-0687">Ribonucleoprotein</keyword>
<keyword id="KW-0689">Ribosomal protein</keyword>
<evidence type="ECO:0000255" key="1">
    <source>
        <dbReference type="HAMAP-Rule" id="MF_00385"/>
    </source>
</evidence>
<evidence type="ECO:0000305" key="2"/>